<sequence>MEDEEEEARALLPGGSDEAGRETRAPPAASGALQALCDPSHLAHRLVVLLLMCFLGFGSYFCYDNPAALQIQVKRDMQVNTTKFMLLYAWYSWPNVVLCFFGGFLIDRVFGIRWGTIIFSCFVCIGQVVFALGGIFNAFWLMELGRFVFGIGGESLAVAQNTYAVSWFKGKELNLVFGLQLSMARIGSTVNMNLMGWLYSKVEASLGSAGHTTLGVTLMIGGITCILSLVCALALAYLDQRAERILHKEQGKTGEVIKLTDVKDFSLPLWLIFIICVCYYVAIFPFIGLVKVFFTEKFGFSSQAASAINSVVYVISAPMSPIFGLLVDKTGKNIIWVLCAVVTTLASHIMLAFTLWNPWIAMCLLGLSYSLLACALWPMVAFVVPEHQLGTAYGFMQSIQNLGLAVISIIAGMILDTRGYLFLEVFFIACVSLSLLSVVLLYMVNHAQGGNLNYSAKKREEMKLSHEE</sequence>
<gene>
    <name evidence="2" type="primary">MFSD1</name>
</gene>
<accession>Q1JQC1</accession>
<comment type="function">
    <text evidence="1 2">Lysosomal dipeptide uniporter that selectively exports lysine, arginine or histidine-containing dipeptides with a net positive charge from the lysosome lumen into the cytosol. Could play a role in a specific type of protein O-glycosylation indirectly regulating macrophages migration and tissue invasion (By similarity). Also essential for liver homeostasis (By similarity).</text>
</comment>
<comment type="catalytic activity">
    <reaction evidence="2">
        <text>L-alpha-aminoacyl-L-arginine(out) = L-alpha-aminoacyl-L-arginine(in)</text>
        <dbReference type="Rhea" id="RHEA:79367"/>
        <dbReference type="ChEBI" id="CHEBI:229968"/>
    </reaction>
</comment>
<comment type="catalytic activity">
    <reaction evidence="2">
        <text>L-arginyl-L-alpha-amino acid(out) = L-arginyl-L-alpha-amino acid(in)</text>
        <dbReference type="Rhea" id="RHEA:79371"/>
        <dbReference type="ChEBI" id="CHEBI:84315"/>
    </reaction>
</comment>
<comment type="catalytic activity">
    <reaction evidence="2">
        <text>L-arginyl-glycine(out) = L-arginyl-glycine(in)</text>
        <dbReference type="Rhea" id="RHEA:79391"/>
        <dbReference type="ChEBI" id="CHEBI:229955"/>
    </reaction>
</comment>
<comment type="catalytic activity">
    <reaction evidence="2">
        <text>L-alpha-aminoacyl-L-lysine(out) = L-alpha-aminoacyl-L-lysine(in)</text>
        <dbReference type="Rhea" id="RHEA:79383"/>
        <dbReference type="ChEBI" id="CHEBI:229966"/>
    </reaction>
</comment>
<comment type="catalytic activity">
    <reaction evidence="2">
        <text>L-aspartyl-L-lysine(out) = L-aspartyl-L-lysine(in)</text>
        <dbReference type="Rhea" id="RHEA:79411"/>
        <dbReference type="ChEBI" id="CHEBI:229953"/>
    </reaction>
</comment>
<comment type="catalytic activity">
    <reaction evidence="2">
        <text>L-alanyl-L-lysine(out) = L-alanyl-L-lysine(in)</text>
        <dbReference type="Rhea" id="RHEA:79415"/>
        <dbReference type="ChEBI" id="CHEBI:192470"/>
    </reaction>
</comment>
<comment type="catalytic activity">
    <reaction evidence="2">
        <text>L-lysyl-L-alpha-amino acid(out) = L-lysyl-L-alpha-amino acid(in)</text>
        <dbReference type="Rhea" id="RHEA:79387"/>
        <dbReference type="ChEBI" id="CHEBI:229965"/>
    </reaction>
</comment>
<comment type="catalytic activity">
    <reaction evidence="2">
        <text>L-lysyl-L-alanine(out) = L-lysyl-L-alanine(in)</text>
        <dbReference type="Rhea" id="RHEA:79399"/>
        <dbReference type="ChEBI" id="CHEBI:229954"/>
    </reaction>
</comment>
<comment type="catalytic activity">
    <reaction evidence="2">
        <text>L-lysyl-L-lysine(out) = L-lysyl-L-lysine(in)</text>
        <dbReference type="Rhea" id="RHEA:79403"/>
        <dbReference type="ChEBI" id="CHEBI:229956"/>
    </reaction>
</comment>
<comment type="catalytic activity">
    <reaction evidence="2">
        <text>L-lysyl-glycine(out) = L-lysyl-glycine(in)</text>
        <dbReference type="Rhea" id="RHEA:79407"/>
        <dbReference type="ChEBI" id="CHEBI:191202"/>
    </reaction>
</comment>
<comment type="catalytic activity">
    <reaction evidence="2">
        <text>L-alpha-aminoacyl-L-histidine(out) = L-alpha-aminoacyl-L-histidine(in)</text>
        <dbReference type="Rhea" id="RHEA:79375"/>
        <dbReference type="ChEBI" id="CHEBI:229967"/>
    </reaction>
</comment>
<comment type="catalytic activity">
    <reaction evidence="2">
        <text>L-histidyl-L-alpha-amino acid(out) = L-histidyl-L-alpha-amino acid(in)</text>
        <dbReference type="Rhea" id="RHEA:79379"/>
        <dbReference type="ChEBI" id="CHEBI:229964"/>
    </reaction>
</comment>
<comment type="catalytic activity">
    <reaction evidence="2">
        <text>L-histidyl-glycine(out) = L-histidyl-glycine(in)</text>
        <dbReference type="Rhea" id="RHEA:79395"/>
        <dbReference type="ChEBI" id="CHEBI:229957"/>
    </reaction>
</comment>
<comment type="subunit">
    <text evidence="1">Homodimer. Interacts with lysosomal protein GLMP (via lumenal domain); the interaction starts while both proteins are still in the endoplasmic reticulum and is required for stabilization of MFSD1 in lysosomes but has no direct effect on its targeting to lysosomes or transporter activity.</text>
</comment>
<comment type="subcellular location">
    <subcellularLocation>
        <location evidence="1">Lysosome membrane</location>
        <topology evidence="3">Multi-pass membrane protein</topology>
    </subcellularLocation>
</comment>
<comment type="domain">
    <text evidence="1">The dileucine internalization motif is required for lysosomal localization.</text>
</comment>
<comment type="similarity">
    <text evidence="5">Belongs to the major facilitator superfamily.</text>
</comment>
<keyword id="KW-0458">Lysosome</keyword>
<keyword id="KW-0472">Membrane</keyword>
<keyword id="KW-1185">Reference proteome</keyword>
<keyword id="KW-0812">Transmembrane</keyword>
<keyword id="KW-1133">Transmembrane helix</keyword>
<keyword id="KW-0813">Transport</keyword>
<organism>
    <name type="scientific">Bos taurus</name>
    <name type="common">Bovine</name>
    <dbReference type="NCBI Taxonomy" id="9913"/>
    <lineage>
        <taxon>Eukaryota</taxon>
        <taxon>Metazoa</taxon>
        <taxon>Chordata</taxon>
        <taxon>Craniata</taxon>
        <taxon>Vertebrata</taxon>
        <taxon>Euteleostomi</taxon>
        <taxon>Mammalia</taxon>
        <taxon>Eutheria</taxon>
        <taxon>Laurasiatheria</taxon>
        <taxon>Artiodactyla</taxon>
        <taxon>Ruminantia</taxon>
        <taxon>Pecora</taxon>
        <taxon>Bovidae</taxon>
        <taxon>Bovinae</taxon>
        <taxon>Bos</taxon>
    </lineage>
</organism>
<reference key="1">
    <citation type="submission" date="2006-05" db="EMBL/GenBank/DDBJ databases">
        <authorList>
            <consortium name="NIH - Mammalian Gene Collection (MGC) project"/>
        </authorList>
    </citation>
    <scope>NUCLEOTIDE SEQUENCE [LARGE SCALE MRNA]</scope>
    <source>
        <strain>Hereford</strain>
        <tissue>Ascending colon</tissue>
    </source>
</reference>
<proteinExistence type="evidence at transcript level"/>
<protein>
    <recommendedName>
        <fullName evidence="2">Lysosomal dipeptide transporter MFSD1</fullName>
    </recommendedName>
    <alternativeName>
        <fullName evidence="2">Major facilitator superfamily domain-containing protein 1</fullName>
    </alternativeName>
</protein>
<dbReference type="EMBL" id="BC116065">
    <property type="protein sequence ID" value="AAI16066.1"/>
    <property type="molecule type" value="mRNA"/>
</dbReference>
<dbReference type="RefSeq" id="NP_001068819.1">
    <property type="nucleotide sequence ID" value="NM_001075351.1"/>
</dbReference>
<dbReference type="SMR" id="Q1JQC1"/>
<dbReference type="FunCoup" id="Q1JQC1">
    <property type="interactions" value="2086"/>
</dbReference>
<dbReference type="STRING" id="9913.ENSBTAP00000012206"/>
<dbReference type="PaxDb" id="9913-ENSBTAP00000012206"/>
<dbReference type="GeneID" id="508337"/>
<dbReference type="KEGG" id="bta:508337"/>
<dbReference type="CTD" id="64747"/>
<dbReference type="eggNOG" id="KOG4686">
    <property type="taxonomic scope" value="Eukaryota"/>
</dbReference>
<dbReference type="HOGENOM" id="CLU_024694_3_1_1"/>
<dbReference type="InParanoid" id="Q1JQC1"/>
<dbReference type="OrthoDB" id="424834at2759"/>
<dbReference type="TreeFam" id="TF323603"/>
<dbReference type="Proteomes" id="UP000009136">
    <property type="component" value="Unplaced"/>
</dbReference>
<dbReference type="GO" id="GO:0005765">
    <property type="term" value="C:lysosomal membrane"/>
    <property type="evidence" value="ECO:0000250"/>
    <property type="project" value="UniProtKB"/>
</dbReference>
<dbReference type="GO" id="GO:0005764">
    <property type="term" value="C:lysosome"/>
    <property type="evidence" value="ECO:0000250"/>
    <property type="project" value="UniProtKB"/>
</dbReference>
<dbReference type="GO" id="GO:0160178">
    <property type="term" value="F:dipeptide uniporter activity"/>
    <property type="evidence" value="ECO:0000250"/>
    <property type="project" value="UniProtKB"/>
</dbReference>
<dbReference type="GO" id="GO:0042803">
    <property type="term" value="F:protein homodimerization activity"/>
    <property type="evidence" value="ECO:0000250"/>
    <property type="project" value="UniProtKB"/>
</dbReference>
<dbReference type="GO" id="GO:0141204">
    <property type="term" value="P:dipeptide transmembrane transport from lysosomal lumen to cytosol"/>
    <property type="evidence" value="ECO:0000250"/>
    <property type="project" value="UniProtKB"/>
</dbReference>
<dbReference type="GO" id="GO:0061462">
    <property type="term" value="P:protein localization to lysosome"/>
    <property type="evidence" value="ECO:0000250"/>
    <property type="project" value="UniProtKB"/>
</dbReference>
<dbReference type="GO" id="GO:0050821">
    <property type="term" value="P:protein stabilization"/>
    <property type="evidence" value="ECO:0000250"/>
    <property type="project" value="UniProtKB"/>
</dbReference>
<dbReference type="CDD" id="cd17340">
    <property type="entry name" value="MFS_MFSD1"/>
    <property type="match status" value="1"/>
</dbReference>
<dbReference type="Gene3D" id="1.20.1250.20">
    <property type="entry name" value="MFS general substrate transporter like domains"/>
    <property type="match status" value="2"/>
</dbReference>
<dbReference type="InterPro" id="IPR011701">
    <property type="entry name" value="MFS"/>
</dbReference>
<dbReference type="InterPro" id="IPR020846">
    <property type="entry name" value="MFS_dom"/>
</dbReference>
<dbReference type="InterPro" id="IPR036259">
    <property type="entry name" value="MFS_trans_sf"/>
</dbReference>
<dbReference type="InterPro" id="IPR052187">
    <property type="entry name" value="MFSD1"/>
</dbReference>
<dbReference type="PANTHER" id="PTHR23512">
    <property type="entry name" value="MAJOR FACILITATOR SUPERFAMILY DOMAIN-CONTAINING PROTEIN 1"/>
    <property type="match status" value="1"/>
</dbReference>
<dbReference type="PANTHER" id="PTHR23512:SF3">
    <property type="entry name" value="MAJOR FACILITATOR SUPERFAMILY DOMAIN-CONTAINING PROTEIN 1"/>
    <property type="match status" value="1"/>
</dbReference>
<dbReference type="Pfam" id="PF07690">
    <property type="entry name" value="MFS_1"/>
    <property type="match status" value="1"/>
</dbReference>
<dbReference type="SUPFAM" id="SSF103473">
    <property type="entry name" value="MFS general substrate transporter"/>
    <property type="match status" value="1"/>
</dbReference>
<dbReference type="PROSITE" id="PS50850">
    <property type="entry name" value="MFS"/>
    <property type="match status" value="1"/>
</dbReference>
<feature type="chain" id="PRO_0000273381" description="Lysosomal dipeptide transporter MFSD1">
    <location>
        <begin position="1"/>
        <end position="468"/>
    </location>
</feature>
<feature type="transmembrane region" description="Helical" evidence="3">
    <location>
        <begin position="42"/>
        <end position="62"/>
    </location>
</feature>
<feature type="transmembrane region" description="Helical" evidence="3">
    <location>
        <begin position="86"/>
        <end position="106"/>
    </location>
</feature>
<feature type="transmembrane region" description="Helical" evidence="3">
    <location>
        <begin position="116"/>
        <end position="136"/>
    </location>
</feature>
<feature type="transmembrane region" description="Helical" evidence="3">
    <location>
        <begin position="138"/>
        <end position="158"/>
    </location>
</feature>
<feature type="transmembrane region" description="Helical" evidence="3">
    <location>
        <begin position="173"/>
        <end position="194"/>
    </location>
</feature>
<feature type="transmembrane region" description="Helical" evidence="3">
    <location>
        <begin position="218"/>
        <end position="238"/>
    </location>
</feature>
<feature type="transmembrane region" description="Helical" evidence="3">
    <location>
        <begin position="270"/>
        <end position="290"/>
    </location>
</feature>
<feature type="transmembrane region" description="Helical" evidence="3">
    <location>
        <begin position="307"/>
        <end position="327"/>
    </location>
</feature>
<feature type="transmembrane region" description="Helical" evidence="3">
    <location>
        <begin position="334"/>
        <end position="354"/>
    </location>
</feature>
<feature type="transmembrane region" description="Helical" evidence="3">
    <location>
        <begin position="364"/>
        <end position="384"/>
    </location>
</feature>
<feature type="transmembrane region" description="Helical" evidence="3">
    <location>
        <begin position="395"/>
        <end position="415"/>
    </location>
</feature>
<feature type="transmembrane region" description="Helical" evidence="3">
    <location>
        <begin position="421"/>
        <end position="441"/>
    </location>
</feature>
<feature type="region of interest" description="Disordered" evidence="4">
    <location>
        <begin position="1"/>
        <end position="25"/>
    </location>
</feature>
<feature type="short sequence motif" description="Dileucine internalization motif" evidence="1">
    <location>
        <begin position="11"/>
        <end position="12"/>
    </location>
</feature>
<name>MFSD1_BOVIN</name>
<evidence type="ECO:0000250" key="1">
    <source>
        <dbReference type="UniProtKB" id="Q9DC37"/>
    </source>
</evidence>
<evidence type="ECO:0000250" key="2">
    <source>
        <dbReference type="UniProtKB" id="Q9H3U5"/>
    </source>
</evidence>
<evidence type="ECO:0000255" key="3"/>
<evidence type="ECO:0000256" key="4">
    <source>
        <dbReference type="SAM" id="MobiDB-lite"/>
    </source>
</evidence>
<evidence type="ECO:0000305" key="5"/>